<keyword id="KW-0903">Direct protein sequencing</keyword>
<keyword id="KW-1015">Disulfide bond</keyword>
<keyword id="KW-0325">Glycoprotein</keyword>
<keyword id="KW-0378">Hydrolase</keyword>
<keyword id="KW-0645">Protease</keyword>
<keyword id="KW-1185">Reference proteome</keyword>
<keyword id="KW-0732">Signal</keyword>
<keyword id="KW-0788">Thiol protease</keyword>
<keyword id="KW-0865">Zymogen</keyword>
<gene>
    <name type="ordered locus">Os04g0650000</name>
    <name type="ordered locus">LOC_Os04g55650</name>
    <name type="ORF">H0212B02.7</name>
    <name type="ORF">OSJNBb0059K02.8</name>
</gene>
<proteinExistence type="evidence at protein level"/>
<accession>P25776</accession>
<accession>Q25AN0</accession>
<accession>Q7XMQ3</accession>
<feature type="signal peptide" evidence="5">
    <location>
        <begin position="1"/>
        <end position="21"/>
    </location>
</feature>
<feature type="propeptide" id="PRO_0000026432" description="Activation peptide" evidence="10">
    <location>
        <begin position="22"/>
        <end position="128"/>
    </location>
</feature>
<feature type="chain" id="PRO_0000026433" description="Oryzain alpha chain">
    <location>
        <begin position="129"/>
        <end position="348"/>
    </location>
</feature>
<feature type="propeptide" id="PRO_0000046020" description="Removed in mature form">
    <location>
        <begin position="349"/>
        <end position="458"/>
    </location>
</feature>
<feature type="active site" evidence="7">
    <location>
        <position position="153"/>
    </location>
</feature>
<feature type="active site" evidence="8">
    <location>
        <position position="289"/>
    </location>
</feature>
<feature type="active site" evidence="9">
    <location>
        <position position="309"/>
    </location>
</feature>
<feature type="glycosylation site" description="N-linked (GlcNAc...) asparagine" evidence="6">
    <location>
        <position position="445"/>
    </location>
</feature>
<feature type="disulfide bond" evidence="1">
    <location>
        <begin position="150"/>
        <end position="192"/>
    </location>
</feature>
<feature type="disulfide bond" evidence="2">
    <location>
        <begin position="184"/>
        <end position="225"/>
    </location>
</feature>
<feature type="disulfide bond" evidence="2">
    <location>
        <begin position="283"/>
        <end position="334"/>
    </location>
</feature>
<feature type="disulfide bond" evidence="3">
    <location>
        <begin position="367"/>
        <end position="379"/>
    </location>
</feature>
<feature type="disulfide bond" evidence="3">
    <location>
        <begin position="373"/>
        <end position="394"/>
    </location>
</feature>
<feature type="sequence conflict" description="In Ref. 1; BAA14402." evidence="11" ref="1">
    <original>G</original>
    <variation>D</variation>
    <location>
        <position position="164"/>
    </location>
</feature>
<feature type="sequence conflict" description="In Ref. 1; BAA14402." evidence="11" ref="1">
    <original>A</original>
    <variation>R</variation>
    <location>
        <position position="256"/>
    </location>
</feature>
<evidence type="ECO:0000250" key="1">
    <source>
        <dbReference type="UniProtKB" id="P07858"/>
    </source>
</evidence>
<evidence type="ECO:0000250" key="2">
    <source>
        <dbReference type="UniProtKB" id="P25250"/>
    </source>
</evidence>
<evidence type="ECO:0000250" key="3">
    <source>
        <dbReference type="UniProtKB" id="P25777"/>
    </source>
</evidence>
<evidence type="ECO:0000250" key="4">
    <source>
        <dbReference type="UniProtKB" id="P80884"/>
    </source>
</evidence>
<evidence type="ECO:0000255" key="5"/>
<evidence type="ECO:0000255" key="6">
    <source>
        <dbReference type="PROSITE-ProRule" id="PRU00498"/>
    </source>
</evidence>
<evidence type="ECO:0000255" key="7">
    <source>
        <dbReference type="PROSITE-ProRule" id="PRU10088"/>
    </source>
</evidence>
<evidence type="ECO:0000255" key="8">
    <source>
        <dbReference type="PROSITE-ProRule" id="PRU10089"/>
    </source>
</evidence>
<evidence type="ECO:0000255" key="9">
    <source>
        <dbReference type="PROSITE-ProRule" id="PRU10090"/>
    </source>
</evidence>
<evidence type="ECO:0000269" key="10">
    <source>
    </source>
</evidence>
<evidence type="ECO:0000305" key="11"/>
<name>ORYA_ORYSJ</name>
<reference key="1">
    <citation type="journal article" date="1991" name="J. Biol. Chem.">
        <title>Molecular cloning and gibberellin-induced expression of multiple cysteine proteinases of rice seeds (oryzains).</title>
        <authorList>
            <person name="Watanabe H."/>
            <person name="Abe K."/>
            <person name="Emori Y."/>
            <person name="Hosoyama H."/>
            <person name="Arai S."/>
        </authorList>
    </citation>
    <scope>NUCLEOTIDE SEQUENCE [MRNA]</scope>
    <scope>PROTEIN SEQUENCE OF 129-135</scope>
    <source>
        <strain>cv. Nipponbare</strain>
        <tissue>Seed</tissue>
    </source>
</reference>
<reference key="2">
    <citation type="journal article" date="2002" name="Nature">
        <title>Sequence and analysis of rice chromosome 4.</title>
        <authorList>
            <person name="Feng Q."/>
            <person name="Zhang Y."/>
            <person name="Hao P."/>
            <person name="Wang S."/>
            <person name="Fu G."/>
            <person name="Huang Y."/>
            <person name="Li Y."/>
            <person name="Zhu J."/>
            <person name="Liu Y."/>
            <person name="Hu X."/>
            <person name="Jia P."/>
            <person name="Zhang Y."/>
            <person name="Zhao Q."/>
            <person name="Ying K."/>
            <person name="Yu S."/>
            <person name="Tang Y."/>
            <person name="Weng Q."/>
            <person name="Zhang L."/>
            <person name="Lu Y."/>
            <person name="Mu J."/>
            <person name="Lu Y."/>
            <person name="Zhang L.S."/>
            <person name="Yu Z."/>
            <person name="Fan D."/>
            <person name="Liu X."/>
            <person name="Lu T."/>
            <person name="Li C."/>
            <person name="Wu Y."/>
            <person name="Sun T."/>
            <person name="Lei H."/>
            <person name="Li T."/>
            <person name="Hu H."/>
            <person name="Guan J."/>
            <person name="Wu M."/>
            <person name="Zhang R."/>
            <person name="Zhou B."/>
            <person name="Chen Z."/>
            <person name="Chen L."/>
            <person name="Jin Z."/>
            <person name="Wang R."/>
            <person name="Yin H."/>
            <person name="Cai Z."/>
            <person name="Ren S."/>
            <person name="Lv G."/>
            <person name="Gu W."/>
            <person name="Zhu G."/>
            <person name="Tu Y."/>
            <person name="Jia J."/>
            <person name="Zhang Y."/>
            <person name="Chen J."/>
            <person name="Kang H."/>
            <person name="Chen X."/>
            <person name="Shao C."/>
            <person name="Sun Y."/>
            <person name="Hu Q."/>
            <person name="Zhang X."/>
            <person name="Zhang W."/>
            <person name="Wang L."/>
            <person name="Ding C."/>
            <person name="Sheng H."/>
            <person name="Gu J."/>
            <person name="Chen S."/>
            <person name="Ni L."/>
            <person name="Zhu F."/>
            <person name="Chen W."/>
            <person name="Lan L."/>
            <person name="Lai Y."/>
            <person name="Cheng Z."/>
            <person name="Gu M."/>
            <person name="Jiang J."/>
            <person name="Li J."/>
            <person name="Hong G."/>
            <person name="Xue Y."/>
            <person name="Han B."/>
        </authorList>
    </citation>
    <scope>NUCLEOTIDE SEQUENCE [LARGE SCALE GENOMIC DNA]</scope>
    <source>
        <strain>cv. Nipponbare</strain>
    </source>
</reference>
<reference key="3">
    <citation type="journal article" date="2005" name="Nature">
        <title>The map-based sequence of the rice genome.</title>
        <authorList>
            <consortium name="International rice genome sequencing project (IRGSP)"/>
        </authorList>
    </citation>
    <scope>NUCLEOTIDE SEQUENCE [LARGE SCALE GENOMIC DNA]</scope>
    <source>
        <strain>cv. Nipponbare</strain>
    </source>
</reference>
<reference key="4">
    <citation type="journal article" date="2013" name="Rice">
        <title>Improvement of the Oryza sativa Nipponbare reference genome using next generation sequence and optical map data.</title>
        <authorList>
            <person name="Kawahara Y."/>
            <person name="de la Bastide M."/>
            <person name="Hamilton J.P."/>
            <person name="Kanamori H."/>
            <person name="McCombie W.R."/>
            <person name="Ouyang S."/>
            <person name="Schwartz D.C."/>
            <person name="Tanaka T."/>
            <person name="Wu J."/>
            <person name="Zhou S."/>
            <person name="Childs K.L."/>
            <person name="Davidson R.M."/>
            <person name="Lin H."/>
            <person name="Quesada-Ocampo L."/>
            <person name="Vaillancourt B."/>
            <person name="Sakai H."/>
            <person name="Lee S.S."/>
            <person name="Kim J."/>
            <person name="Numa H."/>
            <person name="Itoh T."/>
            <person name="Buell C.R."/>
            <person name="Matsumoto T."/>
        </authorList>
    </citation>
    <scope>GENOME REANNOTATION</scope>
    <source>
        <strain>cv. Nipponbare</strain>
    </source>
</reference>
<reference key="5">
    <citation type="journal article" date="2003" name="Science">
        <title>Collection, mapping, and annotation of over 28,000 cDNA clones from japonica rice.</title>
        <authorList>
            <consortium name="The rice full-length cDNA consortium"/>
        </authorList>
    </citation>
    <scope>NUCLEOTIDE SEQUENCE [LARGE SCALE MRNA]</scope>
    <source>
        <strain>cv. Nipponbare</strain>
    </source>
</reference>
<comment type="tissue specificity">
    <text>Expressed only in seeds.</text>
</comment>
<comment type="induction">
    <text>By gibberellic acid (GA).</text>
</comment>
<comment type="similarity">
    <text evidence="7 8 9">Belongs to the peptidase C1 family.</text>
</comment>
<comment type="sequence caution" evidence="11">
    <conflict type="erroneous gene model prediction">
        <sequence resource="EMBL-CDS" id="CAE04498"/>
    </conflict>
</comment>
<comment type="sequence caution" evidence="11">
    <conflict type="erroneous gene model prediction">
        <sequence resource="EMBL-CDS" id="CAJ86180"/>
    </conflict>
</comment>
<sequence>MRISMALAAAALLLLLSLAAADMSIVSYGERSEEEARRLYAEWKAEHGKSYNAVGEEERRYAAFRDNLRYIDEHNAAADAGVHSFRLGLNRFADLTNEEYRDTYLGLRNKPRRERKVSDRYLAADNEALPESVDWRTKGAVAEIKDQGGCGSCWAFSAIAAVEGINQIVTGDLISLSEQELVDCDTSYNEGCNGGLMDYAFDFIINNGGIDTEDDYPYKGKDERCDVNRKNAKVVTIDSYEDVTPNSETSLQKAVANQPVSVAIEAGGRAFQLYSSGIFTGKCGTALDHGVAAVGYGTENGKDYWIVRNSWGKSWGESGYVRMERNIKASSGKCGIAVEPSYPLKKGENPPNPGPTPPSPTPPPTVCDNYYTCPDSTTCCCIYEYGKYCYAWGCCPLEGATCCDDHYSCCPHEYPICNVQQGTCLMAKDSPLAVKALKRTLAKPNLSFLFGNGKKSSA</sequence>
<protein>
    <recommendedName>
        <fullName>Oryzain alpha chain</fullName>
        <ecNumber evidence="4">3.4.22.-</ecNumber>
    </recommendedName>
</protein>
<organism>
    <name type="scientific">Oryza sativa subsp. japonica</name>
    <name type="common">Rice</name>
    <dbReference type="NCBI Taxonomy" id="39947"/>
    <lineage>
        <taxon>Eukaryota</taxon>
        <taxon>Viridiplantae</taxon>
        <taxon>Streptophyta</taxon>
        <taxon>Embryophyta</taxon>
        <taxon>Tracheophyta</taxon>
        <taxon>Spermatophyta</taxon>
        <taxon>Magnoliopsida</taxon>
        <taxon>Liliopsida</taxon>
        <taxon>Poales</taxon>
        <taxon>Poaceae</taxon>
        <taxon>BOP clade</taxon>
        <taxon>Oryzoideae</taxon>
        <taxon>Oryzeae</taxon>
        <taxon>Oryzinae</taxon>
        <taxon>Oryza</taxon>
        <taxon>Oryza sativa</taxon>
    </lineage>
</organism>
<dbReference type="EC" id="3.4.22.-" evidence="4"/>
<dbReference type="EMBL" id="D90406">
    <property type="protein sequence ID" value="BAA14402.1"/>
    <property type="molecule type" value="mRNA"/>
</dbReference>
<dbReference type="EMBL" id="AL442007">
    <property type="protein sequence ID" value="CAJ86180.1"/>
    <property type="status" value="ALT_SEQ"/>
    <property type="molecule type" value="Genomic_DNA"/>
</dbReference>
<dbReference type="EMBL" id="AL606692">
    <property type="protein sequence ID" value="CAE04498.2"/>
    <property type="status" value="ALT_SEQ"/>
    <property type="molecule type" value="Genomic_DNA"/>
</dbReference>
<dbReference type="EMBL" id="AP014960">
    <property type="status" value="NOT_ANNOTATED_CDS"/>
    <property type="molecule type" value="Genomic_DNA"/>
</dbReference>
<dbReference type="EMBL" id="AK071913">
    <property type="status" value="NOT_ANNOTATED_CDS"/>
    <property type="molecule type" value="mRNA"/>
</dbReference>
<dbReference type="PIR" id="JU0388">
    <property type="entry name" value="KHRZOA"/>
</dbReference>
<dbReference type="SMR" id="P25776"/>
<dbReference type="FunCoup" id="P25776">
    <property type="interactions" value="1318"/>
</dbReference>
<dbReference type="IntAct" id="P25776">
    <property type="interactions" value="1"/>
</dbReference>
<dbReference type="STRING" id="39947.P25776"/>
<dbReference type="MEROPS" id="C01.029"/>
<dbReference type="PaxDb" id="39947-P25776"/>
<dbReference type="eggNOG" id="KOG1543">
    <property type="taxonomic scope" value="Eukaryota"/>
</dbReference>
<dbReference type="eggNOG" id="KOG4296">
    <property type="taxonomic scope" value="Eukaryota"/>
</dbReference>
<dbReference type="InParanoid" id="P25776"/>
<dbReference type="Proteomes" id="UP000000763">
    <property type="component" value="Chromosome 4"/>
</dbReference>
<dbReference type="Proteomes" id="UP000059680">
    <property type="component" value="Chromosome 4"/>
</dbReference>
<dbReference type="GO" id="GO:0005615">
    <property type="term" value="C:extracellular space"/>
    <property type="evidence" value="ECO:0000318"/>
    <property type="project" value="GO_Central"/>
</dbReference>
<dbReference type="GO" id="GO:0005764">
    <property type="term" value="C:lysosome"/>
    <property type="evidence" value="ECO:0000318"/>
    <property type="project" value="GO_Central"/>
</dbReference>
<dbReference type="GO" id="GO:0004197">
    <property type="term" value="F:cysteine-type endopeptidase activity"/>
    <property type="evidence" value="ECO:0000318"/>
    <property type="project" value="GO_Central"/>
</dbReference>
<dbReference type="GO" id="GO:0051603">
    <property type="term" value="P:proteolysis involved in protein catabolic process"/>
    <property type="evidence" value="ECO:0000318"/>
    <property type="project" value="GO_Central"/>
</dbReference>
<dbReference type="CDD" id="cd02248">
    <property type="entry name" value="Peptidase_C1A"/>
    <property type="match status" value="1"/>
</dbReference>
<dbReference type="FunFam" id="2.10.25.160:FF:000002">
    <property type="entry name" value="Cysteine protease 1"/>
    <property type="match status" value="1"/>
</dbReference>
<dbReference type="FunFam" id="3.90.70.10:FF:000068">
    <property type="entry name" value="Cysteine protease 1"/>
    <property type="match status" value="1"/>
</dbReference>
<dbReference type="Gene3D" id="3.90.70.10">
    <property type="entry name" value="Cysteine proteinases"/>
    <property type="match status" value="1"/>
</dbReference>
<dbReference type="Gene3D" id="2.10.25.160">
    <property type="entry name" value="Granulin"/>
    <property type="match status" value="1"/>
</dbReference>
<dbReference type="InterPro" id="IPR000118">
    <property type="entry name" value="Granulin"/>
</dbReference>
<dbReference type="InterPro" id="IPR037277">
    <property type="entry name" value="Granulin_sf"/>
</dbReference>
<dbReference type="InterPro" id="IPR038765">
    <property type="entry name" value="Papain-like_cys_pep_sf"/>
</dbReference>
<dbReference type="InterPro" id="IPR025661">
    <property type="entry name" value="Pept_asp_AS"/>
</dbReference>
<dbReference type="InterPro" id="IPR000169">
    <property type="entry name" value="Pept_cys_AS"/>
</dbReference>
<dbReference type="InterPro" id="IPR025660">
    <property type="entry name" value="Pept_his_AS"/>
</dbReference>
<dbReference type="InterPro" id="IPR013128">
    <property type="entry name" value="Peptidase_C1A"/>
</dbReference>
<dbReference type="InterPro" id="IPR000668">
    <property type="entry name" value="Peptidase_C1A_C"/>
</dbReference>
<dbReference type="InterPro" id="IPR039417">
    <property type="entry name" value="Peptidase_C1A_papain-like"/>
</dbReference>
<dbReference type="InterPro" id="IPR013201">
    <property type="entry name" value="Prot_inhib_I29"/>
</dbReference>
<dbReference type="PANTHER" id="PTHR12411">
    <property type="entry name" value="CYSTEINE PROTEASE FAMILY C1-RELATED"/>
    <property type="match status" value="1"/>
</dbReference>
<dbReference type="Pfam" id="PF00396">
    <property type="entry name" value="Granulin"/>
    <property type="match status" value="1"/>
</dbReference>
<dbReference type="Pfam" id="PF08246">
    <property type="entry name" value="Inhibitor_I29"/>
    <property type="match status" value="1"/>
</dbReference>
<dbReference type="Pfam" id="PF00112">
    <property type="entry name" value="Peptidase_C1"/>
    <property type="match status" value="1"/>
</dbReference>
<dbReference type="PRINTS" id="PR00705">
    <property type="entry name" value="PAPAIN"/>
</dbReference>
<dbReference type="SMART" id="SM00277">
    <property type="entry name" value="GRAN"/>
    <property type="match status" value="1"/>
</dbReference>
<dbReference type="SMART" id="SM00848">
    <property type="entry name" value="Inhibitor_I29"/>
    <property type="match status" value="1"/>
</dbReference>
<dbReference type="SMART" id="SM00645">
    <property type="entry name" value="Pept_C1"/>
    <property type="match status" value="1"/>
</dbReference>
<dbReference type="SUPFAM" id="SSF54001">
    <property type="entry name" value="Cysteine proteinases"/>
    <property type="match status" value="1"/>
</dbReference>
<dbReference type="SUPFAM" id="SSF57277">
    <property type="entry name" value="Granulin repeat"/>
    <property type="match status" value="1"/>
</dbReference>
<dbReference type="PROSITE" id="PS00640">
    <property type="entry name" value="THIOL_PROTEASE_ASN"/>
    <property type="match status" value="1"/>
</dbReference>
<dbReference type="PROSITE" id="PS00139">
    <property type="entry name" value="THIOL_PROTEASE_CYS"/>
    <property type="match status" value="1"/>
</dbReference>
<dbReference type="PROSITE" id="PS00639">
    <property type="entry name" value="THIOL_PROTEASE_HIS"/>
    <property type="match status" value="1"/>
</dbReference>